<evidence type="ECO:0000255" key="1"/>
<evidence type="ECO:0000255" key="2">
    <source>
        <dbReference type="HAMAP-Rule" id="MF_01654"/>
    </source>
</evidence>
<feature type="chain" id="PRO_1000187011" description="2-hydroxy-6-oxononadienedioate/2-hydroxy-6-oxononatrienedioate hydrolase">
    <location>
        <begin position="1"/>
        <end position="288"/>
    </location>
</feature>
<feature type="domain" description="AB hydrolase-1" evidence="1">
    <location>
        <begin position="39"/>
        <end position="274"/>
    </location>
</feature>
<feature type="active site" description="Proton acceptor" evidence="2">
    <location>
        <position position="268"/>
    </location>
</feature>
<feature type="site" description="Transition state stabilizer" evidence="2">
    <location>
        <position position="115"/>
    </location>
</feature>
<feature type="site" description="Catalytic role in ketonization of the dienol substrate (substrate destabilization)" evidence="2">
    <location>
        <position position="193"/>
    </location>
</feature>
<organism>
    <name type="scientific">Paraburkholderia phymatum (strain DSM 17167 / CIP 108236 / LMG 21445 / STM815)</name>
    <name type="common">Burkholderia phymatum</name>
    <dbReference type="NCBI Taxonomy" id="391038"/>
    <lineage>
        <taxon>Bacteria</taxon>
        <taxon>Pseudomonadati</taxon>
        <taxon>Pseudomonadota</taxon>
        <taxon>Betaproteobacteria</taxon>
        <taxon>Burkholderiales</taxon>
        <taxon>Burkholderiaceae</taxon>
        <taxon>Paraburkholderia</taxon>
    </lineage>
</organism>
<proteinExistence type="inferred from homology"/>
<gene>
    <name evidence="2" type="primary">mhpC</name>
    <name type="ordered locus">Bphy_4541</name>
</gene>
<dbReference type="EC" id="3.7.1.14" evidence="2"/>
<dbReference type="EMBL" id="CP001044">
    <property type="protein sequence ID" value="ACC73653.1"/>
    <property type="molecule type" value="Genomic_DNA"/>
</dbReference>
<dbReference type="RefSeq" id="WP_012403825.1">
    <property type="nucleotide sequence ID" value="NC_010623.1"/>
</dbReference>
<dbReference type="SMR" id="B2JQW2"/>
<dbReference type="STRING" id="391038.Bphy_4541"/>
<dbReference type="ESTHER" id="burp8-mhpc">
    <property type="family name" value="Carbon-carbon_bond_hydrolase"/>
</dbReference>
<dbReference type="MEROPS" id="S33.995"/>
<dbReference type="KEGG" id="bph:Bphy_4541"/>
<dbReference type="eggNOG" id="COG2267">
    <property type="taxonomic scope" value="Bacteria"/>
</dbReference>
<dbReference type="HOGENOM" id="CLU_020336_13_2_4"/>
<dbReference type="OrthoDB" id="9799989at2"/>
<dbReference type="UniPathway" id="UPA00714"/>
<dbReference type="Proteomes" id="UP000001192">
    <property type="component" value="Chromosome 2"/>
</dbReference>
<dbReference type="GO" id="GO:0005737">
    <property type="term" value="C:cytoplasm"/>
    <property type="evidence" value="ECO:0007669"/>
    <property type="project" value="InterPro"/>
</dbReference>
<dbReference type="GO" id="GO:0052823">
    <property type="term" value="F:2-hydroxy-6-oxonona-2,4,7-trienedioate hydrolase activity"/>
    <property type="evidence" value="ECO:0007669"/>
    <property type="project" value="RHEA"/>
</dbReference>
<dbReference type="GO" id="GO:0018771">
    <property type="term" value="F:2-hydroxy-6-oxonona-2,4-dienedioate hydrolase activity"/>
    <property type="evidence" value="ECO:0007669"/>
    <property type="project" value="UniProtKB-UniRule"/>
</dbReference>
<dbReference type="GO" id="GO:0042803">
    <property type="term" value="F:protein homodimerization activity"/>
    <property type="evidence" value="ECO:0007669"/>
    <property type="project" value="InterPro"/>
</dbReference>
<dbReference type="GO" id="GO:0019380">
    <property type="term" value="P:3-phenylpropionate catabolic process"/>
    <property type="evidence" value="ECO:0007669"/>
    <property type="project" value="UniProtKB-UniRule"/>
</dbReference>
<dbReference type="Gene3D" id="3.40.50.1820">
    <property type="entry name" value="alpha/beta hydrolase"/>
    <property type="match status" value="1"/>
</dbReference>
<dbReference type="HAMAP" id="MF_01654">
    <property type="entry name" value="MhpC"/>
    <property type="match status" value="1"/>
</dbReference>
<dbReference type="InterPro" id="IPR000073">
    <property type="entry name" value="AB_hydrolase_1"/>
</dbReference>
<dbReference type="InterPro" id="IPR029058">
    <property type="entry name" value="AB_hydrolase_fold"/>
</dbReference>
<dbReference type="InterPro" id="IPR000639">
    <property type="entry name" value="Epox_hydrolase-like"/>
</dbReference>
<dbReference type="InterPro" id="IPR023791">
    <property type="entry name" value="MhpC_alpha/beta_hydrolase"/>
</dbReference>
<dbReference type="PANTHER" id="PTHR43689:SF8">
    <property type="entry name" value="ALPHA_BETA-HYDROLASES SUPERFAMILY PROTEIN"/>
    <property type="match status" value="1"/>
</dbReference>
<dbReference type="PANTHER" id="PTHR43689">
    <property type="entry name" value="HYDROLASE"/>
    <property type="match status" value="1"/>
</dbReference>
<dbReference type="Pfam" id="PF00561">
    <property type="entry name" value="Abhydrolase_1"/>
    <property type="match status" value="1"/>
</dbReference>
<dbReference type="PRINTS" id="PR00111">
    <property type="entry name" value="ABHYDROLASE"/>
</dbReference>
<dbReference type="PRINTS" id="PR00412">
    <property type="entry name" value="EPOXHYDRLASE"/>
</dbReference>
<dbReference type="SUPFAM" id="SSF53474">
    <property type="entry name" value="alpha/beta-Hydrolases"/>
    <property type="match status" value="1"/>
</dbReference>
<keyword id="KW-0058">Aromatic hydrocarbons catabolism</keyword>
<keyword id="KW-0378">Hydrolase</keyword>
<keyword id="KW-1185">Reference proteome</keyword>
<comment type="function">
    <text evidence="2">Catalyzes the cleavage of the C5-C6 bond of 2-hydroxy-6-oxononadienedioate and 2-hydroxy-6-oxononatrienedioate, a dienol ring fission product of the bacterial meta-cleavage pathway for degradation of phenylpropionic acid.</text>
</comment>
<comment type="catalytic activity">
    <reaction evidence="2">
        <text>(2Z,4E)-2-hydroxy-6-oxonona-2,4-dienedioate + H2O = (2Z)-2-hydroxypenta-2,4-dienoate + succinate + H(+)</text>
        <dbReference type="Rhea" id="RHEA:34187"/>
        <dbReference type="ChEBI" id="CHEBI:15377"/>
        <dbReference type="ChEBI" id="CHEBI:15378"/>
        <dbReference type="ChEBI" id="CHEBI:30031"/>
        <dbReference type="ChEBI" id="CHEBI:66887"/>
        <dbReference type="ChEBI" id="CHEBI:67152"/>
        <dbReference type="EC" id="3.7.1.14"/>
    </reaction>
</comment>
<comment type="catalytic activity">
    <reaction evidence="2">
        <text>(2Z,4E,7E)-2-hydroxy-6-oxonona-2,4,7-trienedioate + H2O = (2Z)-2-hydroxypenta-2,4-dienoate + fumarate + H(+)</text>
        <dbReference type="Rhea" id="RHEA:34191"/>
        <dbReference type="ChEBI" id="CHEBI:15377"/>
        <dbReference type="ChEBI" id="CHEBI:15378"/>
        <dbReference type="ChEBI" id="CHEBI:29806"/>
        <dbReference type="ChEBI" id="CHEBI:66888"/>
        <dbReference type="ChEBI" id="CHEBI:67152"/>
        <dbReference type="EC" id="3.7.1.14"/>
    </reaction>
</comment>
<comment type="pathway">
    <text evidence="2">Aromatic compound metabolism; 3-phenylpropanoate degradation.</text>
</comment>
<comment type="subunit">
    <text evidence="2">Homodimer.</text>
</comment>
<comment type="similarity">
    <text evidence="2">Belongs to the AB hydrolase superfamily. MhpC family.</text>
</comment>
<name>MHPC_PARP8</name>
<reference key="1">
    <citation type="journal article" date="2014" name="Stand. Genomic Sci.">
        <title>Complete genome sequence of Burkholderia phymatum STM815(T), a broad host range and efficient nitrogen-fixing symbiont of Mimosa species.</title>
        <authorList>
            <person name="Moulin L."/>
            <person name="Klonowska A."/>
            <person name="Caroline B."/>
            <person name="Booth K."/>
            <person name="Vriezen J.A."/>
            <person name="Melkonian R."/>
            <person name="James E.K."/>
            <person name="Young J.P."/>
            <person name="Bena G."/>
            <person name="Hauser L."/>
            <person name="Land M."/>
            <person name="Kyrpides N."/>
            <person name="Bruce D."/>
            <person name="Chain P."/>
            <person name="Copeland A."/>
            <person name="Pitluck S."/>
            <person name="Woyke T."/>
            <person name="Lizotte-Waniewski M."/>
            <person name="Bristow J."/>
            <person name="Riley M."/>
        </authorList>
    </citation>
    <scope>NUCLEOTIDE SEQUENCE [LARGE SCALE GENOMIC DNA]</scope>
    <source>
        <strain>DSM 17167 / CIP 108236 / LMG 21445 / STM815</strain>
    </source>
</reference>
<accession>B2JQW2</accession>
<sequence>MTDTVTHTEAATSKYVNVLEGGTELRVHYNDTGAGKETLVLLHGSGPGASGWANFYRNVDAFANAGYRVILVDCPGWGKSDSIVCTGSRSDLNARVLKGVLDTLGIERAHLVGNSMGGHSAVAFALSYPERVGKLVLMGGGTGGPSQFVPMPTEGIKLLQGLYRDPTLENLKKMLNVFVYDASTMTEELMQTRLDNMLARRDHLENFVKSLTANPKQFPDYGHRLNEIKAPALVIWGRDDRFVPLDVGLRLVWGLPNAEFHVFGRCGHWAQWEHAERFNQMLLDFLGQ</sequence>
<protein>
    <recommendedName>
        <fullName evidence="2">2-hydroxy-6-oxononadienedioate/2-hydroxy-6-oxononatrienedioate hydrolase</fullName>
        <ecNumber evidence="2">3.7.1.14</ecNumber>
    </recommendedName>
    <alternativeName>
        <fullName evidence="2">2-hydroxy-6-ketonona-2,4-diene-1,9-dioic acid 5,6-hydrolase</fullName>
    </alternativeName>
    <alternativeName>
        <fullName evidence="2">2-hydroxy-6-oxonona-2,4,7-triene-1,9-dioic acid 5,6-hydrolase</fullName>
    </alternativeName>
    <alternativeName>
        <fullName evidence="2">2-hydroxy-6-oxonona-2,4-diene-1,9-dioic acid 5,6-hydrolase</fullName>
    </alternativeName>
</protein>